<accession>Q48221</accession>
<reference key="1">
    <citation type="journal article" date="1993" name="Microb. Pathog.">
        <title>Genetic analysis of the diversity in outer membrane protein P2 of non-encapsulated Haemophilus influenzae.</title>
        <authorList>
            <person name="Duim B."/>
            <person name="Dankert J."/>
            <person name="Jansen H.M."/>
            <person name="van Alphen L."/>
        </authorList>
    </citation>
    <scope>NUCLEOTIDE SEQUENCE [GENOMIC DNA]</scope>
    <source>
        <strain>321GC</strain>
    </source>
</reference>
<keyword id="KW-0998">Cell outer membrane</keyword>
<keyword id="KW-0406">Ion transport</keyword>
<keyword id="KW-0472">Membrane</keyword>
<keyword id="KW-0626">Porin</keyword>
<keyword id="KW-0732">Signal</keyword>
<keyword id="KW-0812">Transmembrane</keyword>
<keyword id="KW-1134">Transmembrane beta strand</keyword>
<keyword id="KW-0813">Transport</keyword>
<gene>
    <name type="primary">ompP2</name>
</gene>
<feature type="signal peptide">
    <location>
        <begin position="1"/>
        <end position="20"/>
    </location>
</feature>
<feature type="chain" id="PRO_0000025265" description="Outer membrane protein P2">
    <location>
        <begin position="21"/>
        <end position="353"/>
    </location>
</feature>
<dbReference type="EMBL" id="X73393">
    <property type="protein sequence ID" value="CAA51810.1"/>
    <property type="molecule type" value="Genomic_DNA"/>
</dbReference>
<dbReference type="SMR" id="Q48221"/>
<dbReference type="GO" id="GO:0009279">
    <property type="term" value="C:cell outer membrane"/>
    <property type="evidence" value="ECO:0007669"/>
    <property type="project" value="UniProtKB-SubCell"/>
</dbReference>
<dbReference type="GO" id="GO:0046930">
    <property type="term" value="C:pore complex"/>
    <property type="evidence" value="ECO:0007669"/>
    <property type="project" value="UniProtKB-KW"/>
</dbReference>
<dbReference type="GO" id="GO:0015288">
    <property type="term" value="F:porin activity"/>
    <property type="evidence" value="ECO:0007669"/>
    <property type="project" value="UniProtKB-KW"/>
</dbReference>
<dbReference type="GO" id="GO:0006811">
    <property type="term" value="P:monoatomic ion transport"/>
    <property type="evidence" value="ECO:0007669"/>
    <property type="project" value="UniProtKB-KW"/>
</dbReference>
<dbReference type="CDD" id="cd00342">
    <property type="entry name" value="gram_neg_porins"/>
    <property type="match status" value="1"/>
</dbReference>
<dbReference type="Gene3D" id="2.40.160.10">
    <property type="entry name" value="Porin"/>
    <property type="match status" value="1"/>
</dbReference>
<dbReference type="InterPro" id="IPR050298">
    <property type="entry name" value="Gram-neg_bact_OMP"/>
</dbReference>
<dbReference type="InterPro" id="IPR033900">
    <property type="entry name" value="Gram_neg_porin_domain"/>
</dbReference>
<dbReference type="InterPro" id="IPR023614">
    <property type="entry name" value="Porin_dom_sf"/>
</dbReference>
<dbReference type="PANTHER" id="PTHR34501:SF2">
    <property type="entry name" value="OUTER MEMBRANE PORIN F-RELATED"/>
    <property type="match status" value="1"/>
</dbReference>
<dbReference type="PANTHER" id="PTHR34501">
    <property type="entry name" value="PROTEIN YDDL-RELATED"/>
    <property type="match status" value="1"/>
</dbReference>
<dbReference type="Pfam" id="PF13609">
    <property type="entry name" value="Porin_4"/>
    <property type="match status" value="1"/>
</dbReference>
<dbReference type="SUPFAM" id="SSF56935">
    <property type="entry name" value="Porins"/>
    <property type="match status" value="1"/>
</dbReference>
<sequence>MKKTLAALIVGAFAASAANAAVVYNNEGTKVELGGRVSIIAEQSTSNRKDQKHQHGSLRNQGSRFNIKVTHNLGDGYYALGYYETRFINKDIDGNEKNIGSGFGSITTKLAYAGLGNKELGEATFGLQKTIADKISTAEDKEYGVIEKNSYIPTEGNAIAYTYKGIEGLTLGASYVFGGRNFSDYEITDGKVSNAVQVGAKYDANNIVAGFAYGRTNYKAQQAKTQQVNGALATLGYHFDDLGLLISLDSGYAKTKNKADKHEKRYFVSPGFQYELMEDTNLYGNLKYERINSVDQGEKVREHAVLFGIDHKLHKQVLTYIEGAYARTRTNDKGKTEKTEKEKSVGVGLRVYF</sequence>
<organism>
    <name type="scientific">Haemophilus influenzae</name>
    <dbReference type="NCBI Taxonomy" id="727"/>
    <lineage>
        <taxon>Bacteria</taxon>
        <taxon>Pseudomonadati</taxon>
        <taxon>Pseudomonadota</taxon>
        <taxon>Gammaproteobacteria</taxon>
        <taxon>Pasteurellales</taxon>
        <taxon>Pasteurellaceae</taxon>
        <taxon>Haemophilus</taxon>
    </lineage>
</organism>
<name>OPP28_HAEIF</name>
<evidence type="ECO:0000250" key="1"/>
<evidence type="ECO:0000305" key="2"/>
<proteinExistence type="inferred from homology"/>
<protein>
    <recommendedName>
        <fullName>Outer membrane protein P2</fullName>
        <shortName>OMP P2</shortName>
    </recommendedName>
</protein>
<comment type="function">
    <text evidence="1">Forms pores that allow passive diffusion of small molecules across the outer membrane.</text>
</comment>
<comment type="subunit">
    <text evidence="1">Homotrimer.</text>
</comment>
<comment type="subcellular location">
    <subcellularLocation>
        <location>Cell outer membrane</location>
        <topology>Multi-pass membrane protein</topology>
    </subcellularLocation>
</comment>
<comment type="similarity">
    <text evidence="2">Belongs to the Gram-negative porin family.</text>
</comment>